<feature type="chain" id="PRO_0000304664" description="Mediator of RNA polymerase II transcription subunit 15">
    <location>
        <begin position="1"/>
        <end position="809"/>
    </location>
</feature>
<feature type="region of interest" description="Disordered" evidence="2">
    <location>
        <begin position="115"/>
        <end position="137"/>
    </location>
</feature>
<feature type="region of interest" description="Disordered" evidence="2">
    <location>
        <begin position="183"/>
        <end position="211"/>
    </location>
</feature>
<feature type="region of interest" description="Disordered" evidence="2">
    <location>
        <begin position="413"/>
        <end position="549"/>
    </location>
</feature>
<feature type="compositionally biased region" description="Gly residues" evidence="2">
    <location>
        <begin position="119"/>
        <end position="128"/>
    </location>
</feature>
<feature type="compositionally biased region" description="Low complexity" evidence="2">
    <location>
        <begin position="446"/>
        <end position="467"/>
    </location>
</feature>
<feature type="compositionally biased region" description="Pro residues" evidence="2">
    <location>
        <begin position="468"/>
        <end position="484"/>
    </location>
</feature>
<feature type="compositionally biased region" description="Low complexity" evidence="2">
    <location>
        <begin position="485"/>
        <end position="502"/>
    </location>
</feature>
<feature type="compositionally biased region" description="Low complexity" evidence="2">
    <location>
        <begin position="510"/>
        <end position="520"/>
    </location>
</feature>
<feature type="compositionally biased region" description="Polar residues" evidence="2">
    <location>
        <begin position="533"/>
        <end position="549"/>
    </location>
</feature>
<proteinExistence type="evidence at transcript level"/>
<evidence type="ECO:0000250" key="1"/>
<evidence type="ECO:0000256" key="2">
    <source>
        <dbReference type="SAM" id="MobiDB-lite"/>
    </source>
</evidence>
<evidence type="ECO:0000269" key="3">
    <source>
    </source>
</evidence>
<evidence type="ECO:0000305" key="4"/>
<protein>
    <recommendedName>
        <fullName>Mediator of RNA polymerase II transcription subunit 15</fullName>
    </recommendedName>
    <alternativeName>
        <fullName>Mediator complex subunit 15</fullName>
    </alternativeName>
</protein>
<dbReference type="EMBL" id="BC045472">
    <property type="protein sequence ID" value="AAH45472.1"/>
    <property type="molecule type" value="mRNA"/>
</dbReference>
<dbReference type="RefSeq" id="NP_998238.2">
    <property type="nucleotide sequence ID" value="NM_213073.2"/>
</dbReference>
<dbReference type="SMR" id="Q7ZVN7"/>
<dbReference type="FunCoup" id="Q7ZVN7">
    <property type="interactions" value="1632"/>
</dbReference>
<dbReference type="STRING" id="7955.ENSDARP00000003782"/>
<dbReference type="PaxDb" id="7955-ENSDARP00000003782"/>
<dbReference type="GeneID" id="406346"/>
<dbReference type="KEGG" id="dre:406346"/>
<dbReference type="AGR" id="ZFIN:ZDB-GENE-040426-2032"/>
<dbReference type="CTD" id="51586"/>
<dbReference type="ZFIN" id="ZDB-GENE-040426-2032">
    <property type="gene designation" value="med15"/>
</dbReference>
<dbReference type="eggNOG" id="KOG4274">
    <property type="taxonomic scope" value="Eukaryota"/>
</dbReference>
<dbReference type="InParanoid" id="Q7ZVN7"/>
<dbReference type="OrthoDB" id="10055322at2759"/>
<dbReference type="PRO" id="PR:Q7ZVN7"/>
<dbReference type="Proteomes" id="UP000000437">
    <property type="component" value="Chromosome 21"/>
</dbReference>
<dbReference type="GO" id="GO:0070847">
    <property type="term" value="C:core mediator complex"/>
    <property type="evidence" value="ECO:0000318"/>
    <property type="project" value="GO_Central"/>
</dbReference>
<dbReference type="GO" id="GO:0005737">
    <property type="term" value="C:cytoplasm"/>
    <property type="evidence" value="ECO:0007669"/>
    <property type="project" value="UniProtKB-SubCell"/>
</dbReference>
<dbReference type="GO" id="GO:0005654">
    <property type="term" value="C:nucleoplasm"/>
    <property type="evidence" value="ECO:0007669"/>
    <property type="project" value="UniProtKB-ARBA"/>
</dbReference>
<dbReference type="GO" id="GO:0003712">
    <property type="term" value="F:transcription coregulator activity"/>
    <property type="evidence" value="ECO:0007669"/>
    <property type="project" value="InterPro"/>
</dbReference>
<dbReference type="GO" id="GO:0006355">
    <property type="term" value="P:regulation of DNA-templated transcription"/>
    <property type="evidence" value="ECO:0007669"/>
    <property type="project" value="InterPro"/>
</dbReference>
<dbReference type="FunFam" id="1.10.246.20:FF:000002">
    <property type="entry name" value="Mediator of RNA polymerase II transcription subunit 15"/>
    <property type="match status" value="1"/>
</dbReference>
<dbReference type="Gene3D" id="1.10.246.20">
    <property type="entry name" value="Coactivator CBP, KIX domain"/>
    <property type="match status" value="1"/>
</dbReference>
<dbReference type="InterPro" id="IPR036529">
    <property type="entry name" value="KIX_dom_sf"/>
</dbReference>
<dbReference type="InterPro" id="IPR048386">
    <property type="entry name" value="Med15_C"/>
</dbReference>
<dbReference type="InterPro" id="IPR048385">
    <property type="entry name" value="Med15_central"/>
</dbReference>
<dbReference type="InterPro" id="IPR019087">
    <property type="entry name" value="Med15_N"/>
</dbReference>
<dbReference type="PANTHER" id="PTHR31804">
    <property type="entry name" value="MEDIATOR OF RNA POLYMERASE II TRANSCRIPTION SUBUNIT 15"/>
    <property type="match status" value="1"/>
</dbReference>
<dbReference type="PANTHER" id="PTHR31804:SF3">
    <property type="entry name" value="MEDIATOR OF RNA POLYMERASE II TRANSCRIPTION SUBUNIT 15"/>
    <property type="match status" value="1"/>
</dbReference>
<dbReference type="Pfam" id="PF21539">
    <property type="entry name" value="Med15_C"/>
    <property type="match status" value="1"/>
</dbReference>
<dbReference type="Pfam" id="PF21538">
    <property type="entry name" value="Med15_M"/>
    <property type="match status" value="1"/>
</dbReference>
<dbReference type="Pfam" id="PF09606">
    <property type="entry name" value="Med15_N"/>
    <property type="match status" value="1"/>
</dbReference>
<keyword id="KW-0010">Activator</keyword>
<keyword id="KW-0963">Cytoplasm</keyword>
<keyword id="KW-0539">Nucleus</keyword>
<keyword id="KW-1185">Reference proteome</keyword>
<keyword id="KW-0804">Transcription</keyword>
<keyword id="KW-0805">Transcription regulation</keyword>
<comment type="function">
    <text evidence="1 3">Component of the Mediator complex, a coactivator involved in the regulated transcription of nearly all RNA polymerase II-dependent genes. Mediator functions as a bridge to convey information from gene-specific regulatory proteins to the basal RNA polymerase II transcription machinery. Mediator is recruited to promoters by direct interactions with regulatory proteins and serves as a scaffold for the assembly of a functional preinitiation complex with RNA polymerase II and the general transcription factors. Required for cholesterol-dependent gene regulation (By similarity). Positively regulates the Nodal signaling pathway.</text>
</comment>
<comment type="subunit">
    <text evidence="1">Component of the Mediator complex. Interacts with srebf1 and srebf2. Interacts with smad2, smad3 and smad4 (By similarity).</text>
</comment>
<comment type="subcellular location">
    <subcellularLocation>
        <location evidence="1">Cytoplasm</location>
    </subcellularLocation>
    <subcellularLocation>
        <location evidence="1">Nucleus</location>
    </subcellularLocation>
</comment>
<comment type="similarity">
    <text evidence="4">Belongs to the Mediator complex subunit 15 family.</text>
</comment>
<sequence length="809" mass="89863">MDVPGPDSDWRSPAFRQKVVAQIEEAMRKAGTGHTKSSTEMESHVFTKAKTREEYLSMVARLIIHFRDIHKKAQGGPDPINALQNLPGGVPGVIGPRPPGAQMGGMGQMSMGPHAMQGVAGGQQGAGAAGPMQQMIQQQQQQQQQQQQQQSIQFQTFQPQQQQQATMQSQQPSAMFQQIRLQQLQQHHQNQQMQHQNQQQQQAQNQQQQNQLHQTRMQQQLQLQQLQQQQQQQLHQQQVHAQAQAQAQAQAQAQAQAQAQAQAQAQAQAQAQAQAQAQAQAQAQAQAQSIQQMQQQQQLQVQAQGQPQVQGQGGAVQMPPHSQQQQVLVPQMVQGQHSQMSALSQQQQLKLQQAMQARMQQQQQQQQQQQQQQQQQQQQQQQQQQQQQQQQQQHQQQQVQQVQQASQLTAVPGQMMPRPGMQIPPRLPRATPNSAIPQNPVAIGGQQMPQAQQMMSSPSPVQVQTPQSMPPPPQPQPSPQPPSSQPNSVSSGPTPSPGGFQPSPSPQPSQSPASSRTPQSYPLQVPSPGPLNTPGNPSSVMSPAGASQSEDQLYMDKLRQLSKYIEPLRRMINKIDKNEDRKKDLSKMKSLLNILTDPNTRCPLKTLQKCEIALEKLKNDMAVPTPPPPPVPCTKKQYLCQPILDAVLANIRSPVFNHSLYRTFAPAMTAIHGPQITGPSIPSRKRKLEDDERQAIPNILQGEVARLNSKFLVNLDPSFCSNNGMVHLICKLDDKNLPSVPPLQLSIPADYPDQSPHWEDDGQQYEANPFLRTVHKNMTSKLLQLPDKHSVTALLNTWAQSVRQACLSA</sequence>
<accession>Q7ZVN7</accession>
<organism>
    <name type="scientific">Danio rerio</name>
    <name type="common">Zebrafish</name>
    <name type="synonym">Brachydanio rerio</name>
    <dbReference type="NCBI Taxonomy" id="7955"/>
    <lineage>
        <taxon>Eukaryota</taxon>
        <taxon>Metazoa</taxon>
        <taxon>Chordata</taxon>
        <taxon>Craniata</taxon>
        <taxon>Vertebrata</taxon>
        <taxon>Euteleostomi</taxon>
        <taxon>Actinopterygii</taxon>
        <taxon>Neopterygii</taxon>
        <taxon>Teleostei</taxon>
        <taxon>Ostariophysi</taxon>
        <taxon>Cypriniformes</taxon>
        <taxon>Danionidae</taxon>
        <taxon>Danioninae</taxon>
        <taxon>Danio</taxon>
    </lineage>
</organism>
<gene>
    <name type="primary">med15</name>
    <name type="synonym">pcqap</name>
    <name type="ORF">zgc:55839</name>
</gene>
<reference key="1">
    <citation type="submission" date="2003-01" db="EMBL/GenBank/DDBJ databases">
        <authorList>
            <consortium name="NIH - Zebrafish Gene Collection (ZGC) project"/>
        </authorList>
    </citation>
    <scope>NUCLEOTIDE SEQUENCE [LARGE SCALE MRNA]</scope>
    <source>
        <strain>AB</strain>
    </source>
</reference>
<reference key="2">
    <citation type="journal article" date="2007" name="Dev. Biol.">
        <title>Depletion of Med10 enhances Wnt and suppresses Nodal signaling during zebrafish embryogenesis.</title>
        <authorList>
            <person name="Lin X."/>
            <person name="Rinaldo L."/>
            <person name="Fazly A.F."/>
            <person name="Xu X."/>
        </authorList>
    </citation>
    <scope>FUNCTION</scope>
</reference>
<name>MED15_DANRE</name>